<sequence>MPTPYLSGSAVALVTPFKSDSSIDFEAIARLTEFHVAAGTNIIIPCGTTGESPTLAEEEQVAIIKTVVEAAQGKLMVAAGAGTNNTHHAVELAKNAEKAGAAAILSVAPYYNKPSQEGFYQHYRHIAEAVAVPIIIYNVPGRTGCNVAASTILRLARDFDNVLAVKEASENFTQISELLEERPSNFAVLTGEDSLILPFMAMGGNGVISVAANEIPAQIRQLVESAGSGDLVTARTLYSRYRKLLKLNFIESNPVPVKYALARMGMIEENYRLPLVPLSAESKRAMDEELTLLGLV</sequence>
<proteinExistence type="inferred from homology"/>
<evidence type="ECO:0000255" key="1">
    <source>
        <dbReference type="HAMAP-Rule" id="MF_00418"/>
    </source>
</evidence>
<evidence type="ECO:0000305" key="2"/>
<organism>
    <name type="scientific">Chlorobium chlorochromatii (strain CaD3)</name>
    <dbReference type="NCBI Taxonomy" id="340177"/>
    <lineage>
        <taxon>Bacteria</taxon>
        <taxon>Pseudomonadati</taxon>
        <taxon>Chlorobiota</taxon>
        <taxon>Chlorobiia</taxon>
        <taxon>Chlorobiales</taxon>
        <taxon>Chlorobiaceae</taxon>
        <taxon>Chlorobium/Pelodictyon group</taxon>
        <taxon>Chlorobium</taxon>
    </lineage>
</organism>
<keyword id="KW-0028">Amino-acid biosynthesis</keyword>
<keyword id="KW-0963">Cytoplasm</keyword>
<keyword id="KW-0220">Diaminopimelate biosynthesis</keyword>
<keyword id="KW-0456">Lyase</keyword>
<keyword id="KW-0457">Lysine biosynthesis</keyword>
<keyword id="KW-0704">Schiff base</keyword>
<gene>
    <name evidence="1" type="primary">dapA</name>
    <name type="ordered locus">Cag_1734</name>
</gene>
<name>DAPA_CHLCH</name>
<dbReference type="EC" id="4.3.3.7" evidence="1"/>
<dbReference type="EMBL" id="CP000108">
    <property type="protein sequence ID" value="ABB28985.1"/>
    <property type="molecule type" value="Genomic_DNA"/>
</dbReference>
<dbReference type="SMR" id="Q3APU0"/>
<dbReference type="STRING" id="340177.Cag_1734"/>
<dbReference type="KEGG" id="cch:Cag_1734"/>
<dbReference type="eggNOG" id="COG0329">
    <property type="taxonomic scope" value="Bacteria"/>
</dbReference>
<dbReference type="HOGENOM" id="CLU_049343_7_0_10"/>
<dbReference type="OrthoDB" id="9782828at2"/>
<dbReference type="UniPathway" id="UPA00034">
    <property type="reaction ID" value="UER00017"/>
</dbReference>
<dbReference type="GO" id="GO:0005829">
    <property type="term" value="C:cytosol"/>
    <property type="evidence" value="ECO:0007669"/>
    <property type="project" value="TreeGrafter"/>
</dbReference>
<dbReference type="GO" id="GO:0008840">
    <property type="term" value="F:4-hydroxy-tetrahydrodipicolinate synthase activity"/>
    <property type="evidence" value="ECO:0007669"/>
    <property type="project" value="UniProtKB-UniRule"/>
</dbReference>
<dbReference type="GO" id="GO:0019877">
    <property type="term" value="P:diaminopimelate biosynthetic process"/>
    <property type="evidence" value="ECO:0007669"/>
    <property type="project" value="UniProtKB-UniRule"/>
</dbReference>
<dbReference type="GO" id="GO:0009089">
    <property type="term" value="P:lysine biosynthetic process via diaminopimelate"/>
    <property type="evidence" value="ECO:0007669"/>
    <property type="project" value="UniProtKB-UniRule"/>
</dbReference>
<dbReference type="CDD" id="cd00950">
    <property type="entry name" value="DHDPS"/>
    <property type="match status" value="1"/>
</dbReference>
<dbReference type="Gene3D" id="3.20.20.70">
    <property type="entry name" value="Aldolase class I"/>
    <property type="match status" value="1"/>
</dbReference>
<dbReference type="HAMAP" id="MF_00418">
    <property type="entry name" value="DapA"/>
    <property type="match status" value="1"/>
</dbReference>
<dbReference type="InterPro" id="IPR013785">
    <property type="entry name" value="Aldolase_TIM"/>
</dbReference>
<dbReference type="InterPro" id="IPR005263">
    <property type="entry name" value="DapA"/>
</dbReference>
<dbReference type="InterPro" id="IPR002220">
    <property type="entry name" value="DapA-like"/>
</dbReference>
<dbReference type="InterPro" id="IPR020625">
    <property type="entry name" value="Schiff_base-form_aldolases_AS"/>
</dbReference>
<dbReference type="NCBIfam" id="TIGR00674">
    <property type="entry name" value="dapA"/>
    <property type="match status" value="1"/>
</dbReference>
<dbReference type="PANTHER" id="PTHR12128:SF66">
    <property type="entry name" value="4-HYDROXY-2-OXOGLUTARATE ALDOLASE, MITOCHONDRIAL"/>
    <property type="match status" value="1"/>
</dbReference>
<dbReference type="PANTHER" id="PTHR12128">
    <property type="entry name" value="DIHYDRODIPICOLINATE SYNTHASE"/>
    <property type="match status" value="1"/>
</dbReference>
<dbReference type="Pfam" id="PF00701">
    <property type="entry name" value="DHDPS"/>
    <property type="match status" value="1"/>
</dbReference>
<dbReference type="PIRSF" id="PIRSF001365">
    <property type="entry name" value="DHDPS"/>
    <property type="match status" value="1"/>
</dbReference>
<dbReference type="PRINTS" id="PR00146">
    <property type="entry name" value="DHPICSNTHASE"/>
</dbReference>
<dbReference type="SMART" id="SM01130">
    <property type="entry name" value="DHDPS"/>
    <property type="match status" value="1"/>
</dbReference>
<dbReference type="SUPFAM" id="SSF51569">
    <property type="entry name" value="Aldolase"/>
    <property type="match status" value="1"/>
</dbReference>
<dbReference type="PROSITE" id="PS00666">
    <property type="entry name" value="DHDPS_2"/>
    <property type="match status" value="1"/>
</dbReference>
<protein>
    <recommendedName>
        <fullName evidence="1">4-hydroxy-tetrahydrodipicolinate synthase</fullName>
        <shortName evidence="1">HTPA synthase</shortName>
        <ecNumber evidence="1">4.3.3.7</ecNumber>
    </recommendedName>
</protein>
<accession>Q3APU0</accession>
<feature type="chain" id="PRO_1000050173" description="4-hydroxy-tetrahydrodipicolinate synthase">
    <location>
        <begin position="1"/>
        <end position="296"/>
    </location>
</feature>
<feature type="active site" description="Proton donor/acceptor" evidence="1">
    <location>
        <position position="137"/>
    </location>
</feature>
<feature type="active site" description="Schiff-base intermediate with substrate" evidence="1">
    <location>
        <position position="166"/>
    </location>
</feature>
<feature type="binding site" evidence="1">
    <location>
        <position position="49"/>
    </location>
    <ligand>
        <name>pyruvate</name>
        <dbReference type="ChEBI" id="CHEBI:15361"/>
    </ligand>
</feature>
<feature type="binding site" evidence="1">
    <location>
        <position position="208"/>
    </location>
    <ligand>
        <name>pyruvate</name>
        <dbReference type="ChEBI" id="CHEBI:15361"/>
    </ligand>
</feature>
<feature type="site" description="Part of a proton relay during catalysis" evidence="1">
    <location>
        <position position="48"/>
    </location>
</feature>
<feature type="site" description="Part of a proton relay during catalysis" evidence="1">
    <location>
        <position position="111"/>
    </location>
</feature>
<reference key="1">
    <citation type="submission" date="2005-08" db="EMBL/GenBank/DDBJ databases">
        <title>Complete sequence of Chlorobium chlorochromatii CaD3.</title>
        <authorList>
            <consortium name="US DOE Joint Genome Institute"/>
            <person name="Copeland A."/>
            <person name="Lucas S."/>
            <person name="Lapidus A."/>
            <person name="Barry K."/>
            <person name="Detter J.C."/>
            <person name="Glavina T."/>
            <person name="Hammon N."/>
            <person name="Israni S."/>
            <person name="Pitluck S."/>
            <person name="Bryant D."/>
            <person name="Schmutz J."/>
            <person name="Larimer F."/>
            <person name="Land M."/>
            <person name="Kyrpides N."/>
            <person name="Ivanova N."/>
            <person name="Richardson P."/>
        </authorList>
    </citation>
    <scope>NUCLEOTIDE SEQUENCE [LARGE SCALE GENOMIC DNA]</scope>
    <source>
        <strain>CaD3</strain>
    </source>
</reference>
<comment type="function">
    <text evidence="1">Catalyzes the condensation of (S)-aspartate-beta-semialdehyde [(S)-ASA] and pyruvate to 4-hydroxy-tetrahydrodipicolinate (HTPA).</text>
</comment>
<comment type="catalytic activity">
    <reaction evidence="1">
        <text>L-aspartate 4-semialdehyde + pyruvate = (2S,4S)-4-hydroxy-2,3,4,5-tetrahydrodipicolinate + H2O + H(+)</text>
        <dbReference type="Rhea" id="RHEA:34171"/>
        <dbReference type="ChEBI" id="CHEBI:15361"/>
        <dbReference type="ChEBI" id="CHEBI:15377"/>
        <dbReference type="ChEBI" id="CHEBI:15378"/>
        <dbReference type="ChEBI" id="CHEBI:67139"/>
        <dbReference type="ChEBI" id="CHEBI:537519"/>
        <dbReference type="EC" id="4.3.3.7"/>
    </reaction>
</comment>
<comment type="pathway">
    <text evidence="1">Amino-acid biosynthesis; L-lysine biosynthesis via DAP pathway; (S)-tetrahydrodipicolinate from L-aspartate: step 3/4.</text>
</comment>
<comment type="subunit">
    <text evidence="1">Homotetramer; dimer of dimers.</text>
</comment>
<comment type="subcellular location">
    <subcellularLocation>
        <location evidence="1">Cytoplasm</location>
    </subcellularLocation>
</comment>
<comment type="similarity">
    <text evidence="1">Belongs to the DapA family.</text>
</comment>
<comment type="caution">
    <text evidence="2">Was originally thought to be a dihydrodipicolinate synthase (DHDPS), catalyzing the condensation of (S)-aspartate-beta-semialdehyde [(S)-ASA] and pyruvate to dihydrodipicolinate (DHDP). However, it was shown in E.coli that the product of the enzymatic reaction is not dihydrodipicolinate but in fact (4S)-4-hydroxy-2,3,4,5-tetrahydro-(2S)-dipicolinic acid (HTPA), and that the consecutive dehydration reaction leading to DHDP is not spontaneous but catalyzed by DapB.</text>
</comment>